<sequence>MHLTRLNIERVRNLKTVALHGLQPFNVFYGANGSGKTSILEAIHLLATGRSFRTHIPKNYIQYEADDAIVFAQSATEKIGMQKLASGEQLMKVNGDTVATQGQLAKLLPLQHIDPQSTDIIDHGAKPRRQLLDWLMFHVEPEFYFAWQYYSRALKQRNTLLKTRRNLSLADLEPWNKMLSDYGEILHSQRLSIVEQWNVYFQNDLSQLLPDLEIELEYSPGFHTEQGLMQDLLNQHQKDIERRYTEYGPHRADLRLKTPFGHADDVLSRGQKKLLIIALKLSQIAMLHASNKETVVLLDDLTAELDLTAQQRLIERLSQLGSQVFMTTLDHASVKKHLHDLSISYQLFSVESGQVSLAAS</sequence>
<evidence type="ECO:0000255" key="1">
    <source>
        <dbReference type="HAMAP-Rule" id="MF_00365"/>
    </source>
</evidence>
<name>RECF_ACIBT</name>
<feature type="chain" id="PRO_1000205467" description="DNA replication and repair protein RecF">
    <location>
        <begin position="1"/>
        <end position="360"/>
    </location>
</feature>
<feature type="binding site" evidence="1">
    <location>
        <begin position="30"/>
        <end position="37"/>
    </location>
    <ligand>
        <name>ATP</name>
        <dbReference type="ChEBI" id="CHEBI:30616"/>
    </ligand>
</feature>
<accession>A3M0Q6</accession>
<dbReference type="EMBL" id="CP000521">
    <property type="protein sequence ID" value="ABO10500.2"/>
    <property type="molecule type" value="Genomic_DNA"/>
</dbReference>
<dbReference type="RefSeq" id="WP_000550808.1">
    <property type="nucleotide sequence ID" value="NZ_CP053098.1"/>
</dbReference>
<dbReference type="SMR" id="A3M0Q6"/>
<dbReference type="DNASU" id="4918813"/>
<dbReference type="KEGG" id="acb:A1S_0003"/>
<dbReference type="HOGENOM" id="CLU_040267_0_0_6"/>
<dbReference type="GO" id="GO:0005737">
    <property type="term" value="C:cytoplasm"/>
    <property type="evidence" value="ECO:0007669"/>
    <property type="project" value="UniProtKB-SubCell"/>
</dbReference>
<dbReference type="GO" id="GO:0005524">
    <property type="term" value="F:ATP binding"/>
    <property type="evidence" value="ECO:0007669"/>
    <property type="project" value="UniProtKB-UniRule"/>
</dbReference>
<dbReference type="GO" id="GO:0003697">
    <property type="term" value="F:single-stranded DNA binding"/>
    <property type="evidence" value="ECO:0007669"/>
    <property type="project" value="UniProtKB-UniRule"/>
</dbReference>
<dbReference type="GO" id="GO:0006260">
    <property type="term" value="P:DNA replication"/>
    <property type="evidence" value="ECO:0007669"/>
    <property type="project" value="UniProtKB-UniRule"/>
</dbReference>
<dbReference type="GO" id="GO:0000731">
    <property type="term" value="P:DNA synthesis involved in DNA repair"/>
    <property type="evidence" value="ECO:0007669"/>
    <property type="project" value="TreeGrafter"/>
</dbReference>
<dbReference type="GO" id="GO:0006302">
    <property type="term" value="P:double-strand break repair"/>
    <property type="evidence" value="ECO:0007669"/>
    <property type="project" value="TreeGrafter"/>
</dbReference>
<dbReference type="GO" id="GO:0009432">
    <property type="term" value="P:SOS response"/>
    <property type="evidence" value="ECO:0007669"/>
    <property type="project" value="UniProtKB-UniRule"/>
</dbReference>
<dbReference type="Gene3D" id="3.40.50.300">
    <property type="entry name" value="P-loop containing nucleotide triphosphate hydrolases"/>
    <property type="match status" value="1"/>
</dbReference>
<dbReference type="Gene3D" id="1.20.1050.90">
    <property type="entry name" value="RecF/RecN/SMC, N-terminal domain"/>
    <property type="match status" value="1"/>
</dbReference>
<dbReference type="HAMAP" id="MF_00365">
    <property type="entry name" value="RecF"/>
    <property type="match status" value="1"/>
</dbReference>
<dbReference type="InterPro" id="IPR001238">
    <property type="entry name" value="DNA-binding_RecF"/>
</dbReference>
<dbReference type="InterPro" id="IPR027417">
    <property type="entry name" value="P-loop_NTPase"/>
</dbReference>
<dbReference type="InterPro" id="IPR003395">
    <property type="entry name" value="RecF/RecN/SMC_N"/>
</dbReference>
<dbReference type="InterPro" id="IPR042174">
    <property type="entry name" value="RecF_2"/>
</dbReference>
<dbReference type="NCBIfam" id="TIGR00611">
    <property type="entry name" value="recf"/>
    <property type="match status" value="1"/>
</dbReference>
<dbReference type="PANTHER" id="PTHR32182">
    <property type="entry name" value="DNA REPLICATION AND REPAIR PROTEIN RECF"/>
    <property type="match status" value="1"/>
</dbReference>
<dbReference type="PANTHER" id="PTHR32182:SF0">
    <property type="entry name" value="DNA REPLICATION AND REPAIR PROTEIN RECF"/>
    <property type="match status" value="1"/>
</dbReference>
<dbReference type="Pfam" id="PF02463">
    <property type="entry name" value="SMC_N"/>
    <property type="match status" value="1"/>
</dbReference>
<dbReference type="SUPFAM" id="SSF52540">
    <property type="entry name" value="P-loop containing nucleoside triphosphate hydrolases"/>
    <property type="match status" value="1"/>
</dbReference>
<proteinExistence type="inferred from homology"/>
<gene>
    <name evidence="1" type="primary">recF</name>
    <name type="ordered locus">A1S_0003</name>
</gene>
<comment type="function">
    <text evidence="1">The RecF protein is involved in DNA metabolism; it is required for DNA replication and normal SOS inducibility. RecF binds preferentially to single-stranded, linear DNA. It also seems to bind ATP.</text>
</comment>
<comment type="subcellular location">
    <subcellularLocation>
        <location evidence="1">Cytoplasm</location>
    </subcellularLocation>
</comment>
<comment type="similarity">
    <text evidence="1">Belongs to the RecF family.</text>
</comment>
<organism>
    <name type="scientific">Acinetobacter baumannii (strain ATCC 17978 / DSM 105126 / CIP 53.77 / LMG 1025 / NCDC KC755 / 5377)</name>
    <dbReference type="NCBI Taxonomy" id="400667"/>
    <lineage>
        <taxon>Bacteria</taxon>
        <taxon>Pseudomonadati</taxon>
        <taxon>Pseudomonadota</taxon>
        <taxon>Gammaproteobacteria</taxon>
        <taxon>Moraxellales</taxon>
        <taxon>Moraxellaceae</taxon>
        <taxon>Acinetobacter</taxon>
        <taxon>Acinetobacter calcoaceticus/baumannii complex</taxon>
    </lineage>
</organism>
<protein>
    <recommendedName>
        <fullName evidence="1">DNA replication and repair protein RecF</fullName>
    </recommendedName>
</protein>
<reference key="1">
    <citation type="journal article" date="2007" name="Genes Dev.">
        <title>New insights into Acinetobacter baumannii pathogenesis revealed by high-density pyrosequencing and transposon mutagenesis.</title>
        <authorList>
            <person name="Smith M.G."/>
            <person name="Gianoulis T.A."/>
            <person name="Pukatzki S."/>
            <person name="Mekalanos J.J."/>
            <person name="Ornston L.N."/>
            <person name="Gerstein M."/>
            <person name="Snyder M."/>
        </authorList>
    </citation>
    <scope>NUCLEOTIDE SEQUENCE [LARGE SCALE GENOMIC DNA]</scope>
    <source>
        <strain>ATCC 17978 / DSM 105126 / CIP 53.77 / LMG 1025 / NCDC KC755 / 5377</strain>
    </source>
</reference>
<keyword id="KW-0067">ATP-binding</keyword>
<keyword id="KW-0963">Cytoplasm</keyword>
<keyword id="KW-0227">DNA damage</keyword>
<keyword id="KW-0234">DNA repair</keyword>
<keyword id="KW-0235">DNA replication</keyword>
<keyword id="KW-0238">DNA-binding</keyword>
<keyword id="KW-0547">Nucleotide-binding</keyword>
<keyword id="KW-0742">SOS response</keyword>